<feature type="chain" id="PRO_0000308487" description="Beta-lactamase">
    <location>
        <begin position="1"/>
        <end position="358"/>
    </location>
</feature>
<feature type="active site" description="Acyl-ester intermediate" evidence="1 3">
    <location>
        <position position="60"/>
    </location>
</feature>
<feature type="active site" description="Proton acceptor" evidence="1">
    <location>
        <position position="146"/>
    </location>
</feature>
<feature type="binding site" evidence="1">
    <location>
        <begin position="311"/>
        <end position="313"/>
    </location>
    <ligand>
        <name>substrate</name>
    </ligand>
</feature>
<feature type="helix" evidence="10">
    <location>
        <begin position="4"/>
        <end position="18"/>
    </location>
</feature>
<feature type="strand" evidence="10">
    <location>
        <begin position="22"/>
        <end position="30"/>
    </location>
</feature>
<feature type="strand" evidence="10">
    <location>
        <begin position="33"/>
        <end position="42"/>
    </location>
</feature>
<feature type="turn" evidence="10">
    <location>
        <begin position="44"/>
        <end position="46"/>
    </location>
</feature>
<feature type="strand" evidence="10">
    <location>
        <begin position="55"/>
        <end position="57"/>
    </location>
</feature>
<feature type="helix" evidence="10">
    <location>
        <begin position="59"/>
        <end position="61"/>
    </location>
</feature>
<feature type="helix" evidence="10">
    <location>
        <begin position="62"/>
        <end position="75"/>
    </location>
</feature>
<feature type="helix" evidence="10">
    <location>
        <begin position="85"/>
        <end position="88"/>
    </location>
</feature>
<feature type="helix" evidence="10">
    <location>
        <begin position="90"/>
        <end position="92"/>
    </location>
</feature>
<feature type="helix" evidence="10">
    <location>
        <begin position="96"/>
        <end position="98"/>
    </location>
</feature>
<feature type="strand" evidence="10">
    <location>
        <begin position="99"/>
        <end position="101"/>
    </location>
</feature>
<feature type="helix" evidence="10">
    <location>
        <begin position="102"/>
        <end position="106"/>
    </location>
</feature>
<feature type="helix" evidence="10">
    <location>
        <begin position="125"/>
        <end position="133"/>
    </location>
</feature>
<feature type="turn" evidence="10">
    <location>
        <begin position="140"/>
        <end position="142"/>
    </location>
</feature>
<feature type="helix" evidence="10">
    <location>
        <begin position="148"/>
        <end position="160"/>
    </location>
</feature>
<feature type="turn" evidence="10">
    <location>
        <begin position="161"/>
        <end position="163"/>
    </location>
</feature>
<feature type="helix" evidence="10">
    <location>
        <begin position="166"/>
        <end position="172"/>
    </location>
</feature>
<feature type="turn" evidence="10">
    <location>
        <begin position="173"/>
        <end position="175"/>
    </location>
</feature>
<feature type="helix" evidence="10">
    <location>
        <begin position="176"/>
        <end position="178"/>
    </location>
</feature>
<feature type="strand" evidence="10">
    <location>
        <begin position="181"/>
        <end position="186"/>
    </location>
</feature>
<feature type="helix" evidence="10">
    <location>
        <begin position="189"/>
        <end position="194"/>
    </location>
</feature>
<feature type="helix" evidence="10">
    <location>
        <begin position="214"/>
        <end position="217"/>
    </location>
</feature>
<feature type="helix" evidence="10">
    <location>
        <begin position="224"/>
        <end position="235"/>
    </location>
</feature>
<feature type="helix" evidence="10">
    <location>
        <begin position="237"/>
        <end position="239"/>
    </location>
</feature>
<feature type="helix" evidence="10">
    <location>
        <begin position="242"/>
        <end position="251"/>
    </location>
</feature>
<feature type="strand" evidence="10">
    <location>
        <begin position="253"/>
        <end position="258"/>
    </location>
</feature>
<feature type="strand" evidence="10">
    <location>
        <begin position="261"/>
        <end position="263"/>
    </location>
</feature>
<feature type="strand" evidence="10">
    <location>
        <begin position="268"/>
        <end position="273"/>
    </location>
</feature>
<feature type="helix" evidence="10">
    <location>
        <begin position="276"/>
        <end position="282"/>
    </location>
</feature>
<feature type="helix" evidence="10">
    <location>
        <begin position="286"/>
        <end position="289"/>
    </location>
</feature>
<feature type="strand" evidence="10">
    <location>
        <begin position="295"/>
        <end position="301"/>
    </location>
</feature>
<feature type="strand" evidence="10">
    <location>
        <begin position="305"/>
        <end position="314"/>
    </location>
</feature>
<feature type="strand" evidence="10">
    <location>
        <begin position="319"/>
        <end position="325"/>
    </location>
</feature>
<feature type="turn" evidence="10">
    <location>
        <begin position="326"/>
        <end position="329"/>
    </location>
</feature>
<feature type="strand" evidence="10">
    <location>
        <begin position="330"/>
        <end position="338"/>
    </location>
</feature>
<feature type="helix" evidence="10">
    <location>
        <begin position="342"/>
        <end position="355"/>
    </location>
</feature>
<proteinExistence type="evidence at protein level"/>
<comment type="function">
    <text evidence="8">This protein is a serine beta-lactamase with a substrate specificity for cephalosporins.</text>
</comment>
<comment type="catalytic activity">
    <reaction evidence="3 5">
        <text>a beta-lactam + H2O = a substituted beta-amino acid</text>
        <dbReference type="Rhea" id="RHEA:20401"/>
        <dbReference type="ChEBI" id="CHEBI:15377"/>
        <dbReference type="ChEBI" id="CHEBI:35627"/>
        <dbReference type="ChEBI" id="CHEBI:140347"/>
        <dbReference type="EC" id="3.5.2.6"/>
    </reaction>
</comment>
<comment type="biophysicochemical properties">
    <kinetics>
        <KM evidence="4 5">120 uM for nitrocefin</KM>
        <KM evidence="4 5">116 uM for nitrocefin (at 30 degrees Celsius in 50 mM sodium phosphate, pH 7.0)</KM>
        <KM evidence="4 5">50 uM for cephalexin (at 30 degrees Celsius in 50 mM sodium phosphate, pH 7.0)</KM>
        <KM evidence="4 5">2.3 uM for benzylpenicillin (at 30 degrees Celsius in 50 mM sodium phosphate, pH 7.0)</KM>
        <KM evidence="4 5">5.1 uM for ampicillin (at 30 degrees Celsius in 50 mM sodium phosphate, pH 7.0)</KM>
        <KM evidence="4 5">3.7 uM for carbenicillin (at 30 degrees Celsius in 50 mM sodium phosphate, pH 7.0)</KM>
        <KM evidence="4 5">0.118 uM for oxacillin (at 30 degrees Celsius in 50 mM sodium phosphate, pH 7.0)</KM>
        <KM evidence="4 5">0.016 uM for cloxacillin (at 30 degrees Celsius in 50 mM sodium phosphate, pH 7.0)</KM>
    </kinetics>
</comment>
<comment type="subcellular location">
    <subcellularLocation>
        <location evidence="5">Periplasm</location>
    </subcellularLocation>
</comment>
<comment type="mass spectrometry" mass="38723.1" error="4.9" method="Electrospray" evidence="4"/>
<comment type="miscellaneous">
    <text evidence="9">The class C beta-lactamase family has a specific amino-acid numbering system known as SANC, for structural alignment-based numbering of class C beta-lactamases, or else the simpler name structural position. A multiple sequence alignment was used to derive a consensus sequence and then the consensus was numbered taking into account insertions and deletions. This allows use of identical numbers, e.g. for active site residues, despite differences in protein length. UniProt always uses natural numbering of residues, hence there appear to be differences in numbering between this entry and some papers.</text>
</comment>
<comment type="similarity">
    <text evidence="2">Belongs to the class-C beta-lactamase family.</text>
</comment>
<organism>
    <name type="scientific">Pseudomonas fluorescens</name>
    <dbReference type="NCBI Taxonomy" id="294"/>
    <lineage>
        <taxon>Bacteria</taxon>
        <taxon>Pseudomonadati</taxon>
        <taxon>Pseudomonadota</taxon>
        <taxon>Gammaproteobacteria</taxon>
        <taxon>Pseudomonadales</taxon>
        <taxon>Pseudomonadaceae</taxon>
        <taxon>Pseudomonas</taxon>
    </lineage>
</organism>
<sequence length="358" mass="38728">ATDIRQVVDSTVEPLMQQQDIAGLSVAVIQNGKAQYFNYGVANKDSKQPITENTLFEIGSVSKTFTATLAGYALANGKLKLSDPASQYLPALRGDKFDHISLLNLGTYTAGGLPLQFPEESDNTGKMISYYQHWKPAFAPGTQRLYSNPSIGLFGHLAAQSLGQPFEKLMEQTVLPKLGLKHTFISVPETQMSLYAQGYDKAGKPVRVSPGALDAEAYGIKTSTSDLIHYVEVNMHPAKLEKPLQQAIAATHTGYYTVDGMTQGLGWEMYPYPIKVDALVEGNSTQMAMEPHKVNWLTPPQAAPLDTLVNKTGSTGGFGAYVAYVPSKGLGVVILANKNYPNAERVKAAHAILSAMDQ</sequence>
<gene>
    <name evidence="1" type="primary">ampC</name>
</gene>
<reference evidence="8" key="1">
    <citation type="journal article" date="2008" name="FEBS J.">
        <title>Crystal structure of a cold-adapted class C beta-lactamase.</title>
        <authorList>
            <person name="Michaux C."/>
            <person name="Massant J."/>
            <person name="Kerff F."/>
            <person name="Frere J.-M."/>
            <person name="Docquier J.-D."/>
            <person name="Vandenberghe I."/>
            <person name="Samyn B."/>
            <person name="Pierrard A."/>
            <person name="Feller G."/>
            <person name="Charlier P."/>
            <person name="Van Beeumen J."/>
            <person name="Wouters J."/>
        </authorList>
    </citation>
    <scope>PROTEIN SEQUENCE</scope>
    <scope>X-RAY CRYSTALLOGRAPHY (2.2 ANGSTROMS)</scope>
    <scope>BIOPHYSICOCHEMICAL PROPERTIES</scope>
    <scope>MASS SPECTROMETRY</scope>
    <source>
        <strain evidence="4">TAE 4</strain>
    </source>
</reference>
<reference evidence="8" key="2">
    <citation type="journal article" date="1998" name="FEMS Microbiol. Lett.">
        <title>Inducible class C beta-lactamases produced by psychrophilic bacteria.</title>
        <authorList>
            <person name="Pierrard A."/>
            <person name="Ledent P."/>
            <person name="Docquier J.-D."/>
            <person name="Feller G."/>
            <person name="Gerday C."/>
            <person name="Frere J.-M."/>
        </authorList>
    </citation>
    <scope>CATALYTIC ACTIVITY</scope>
    <scope>BIOPHYSICOCHEMICAL PROPERTIES</scope>
    <scope>SUBCELLULAR LOCATION</scope>
</reference>
<reference key="3">
    <citation type="journal article" date="2020" name="Antimicrob. Agents Chemother.">
        <title>A Standard Numbering Scheme for Class C beta-Lactamases.</title>
        <authorList>
            <person name="Mack A.R."/>
            <person name="Barnes M.D."/>
            <person name="Taracila M.A."/>
            <person name="Hujer A.M."/>
            <person name="Hujer K.M."/>
            <person name="Cabot G."/>
            <person name="Feldgarden M."/>
            <person name="Haft D.H."/>
            <person name="Klimke W."/>
            <person name="van den Akker F."/>
            <person name="Vila A.J."/>
            <person name="Smania A."/>
            <person name="Haider S."/>
            <person name="Papp-Wallace K.M."/>
            <person name="Bradford P.A."/>
            <person name="Rossolini G.M."/>
            <person name="Docquier J.D."/>
            <person name="Frere J.M."/>
            <person name="Galleni M."/>
            <person name="Hanson N.D."/>
            <person name="Oliver A."/>
            <person name="Plesiat P."/>
            <person name="Poirel L."/>
            <person name="Nordmann P."/>
            <person name="Palzkill T.G."/>
            <person name="Jacoby G.A."/>
            <person name="Bush K."/>
            <person name="Bonomo R.A."/>
        </authorList>
    </citation>
    <scope>AMINO ACID NUMBERING SCHEME</scope>
</reference>
<name>AMPC_PSEFL</name>
<dbReference type="EC" id="3.5.2.6"/>
<dbReference type="PDB" id="2QZ6">
    <property type="method" value="X-ray"/>
    <property type="resolution" value="2.26 A"/>
    <property type="chains" value="A=1-358"/>
</dbReference>
<dbReference type="PDBsum" id="2QZ6"/>
<dbReference type="SMR" id="P85302"/>
<dbReference type="BRENDA" id="3.5.2.6">
    <property type="organism ID" value="5121"/>
</dbReference>
<dbReference type="EvolutionaryTrace" id="P85302"/>
<dbReference type="GO" id="GO:0030288">
    <property type="term" value="C:outer membrane-bounded periplasmic space"/>
    <property type="evidence" value="ECO:0007669"/>
    <property type="project" value="InterPro"/>
</dbReference>
<dbReference type="GO" id="GO:0008800">
    <property type="term" value="F:beta-lactamase activity"/>
    <property type="evidence" value="ECO:0007669"/>
    <property type="project" value="UniProtKB-EC"/>
</dbReference>
<dbReference type="GO" id="GO:0017001">
    <property type="term" value="P:antibiotic catabolic process"/>
    <property type="evidence" value="ECO:0007669"/>
    <property type="project" value="InterPro"/>
</dbReference>
<dbReference type="GO" id="GO:0046677">
    <property type="term" value="P:response to antibiotic"/>
    <property type="evidence" value="ECO:0007669"/>
    <property type="project" value="UniProtKB-KW"/>
</dbReference>
<dbReference type="Gene3D" id="3.40.710.10">
    <property type="entry name" value="DD-peptidase/beta-lactamase superfamily"/>
    <property type="match status" value="1"/>
</dbReference>
<dbReference type="InterPro" id="IPR050491">
    <property type="entry name" value="Bact_CellWall_Synth/Modif"/>
</dbReference>
<dbReference type="InterPro" id="IPR001466">
    <property type="entry name" value="Beta-lactam-related"/>
</dbReference>
<dbReference type="InterPro" id="IPR012338">
    <property type="entry name" value="Beta-lactam/transpept-like"/>
</dbReference>
<dbReference type="InterPro" id="IPR001586">
    <property type="entry name" value="Beta-lactam_class-C_AS"/>
</dbReference>
<dbReference type="NCBIfam" id="NF033085">
    <property type="entry name" value="bla_class_C"/>
    <property type="match status" value="1"/>
</dbReference>
<dbReference type="PANTHER" id="PTHR46825:SF8">
    <property type="entry name" value="BETA-LACTAMASE-RELATED"/>
    <property type="match status" value="1"/>
</dbReference>
<dbReference type="PANTHER" id="PTHR46825">
    <property type="entry name" value="D-ALANYL-D-ALANINE-CARBOXYPEPTIDASE/ENDOPEPTIDASE AMPH"/>
    <property type="match status" value="1"/>
</dbReference>
<dbReference type="Pfam" id="PF00144">
    <property type="entry name" value="Beta-lactamase"/>
    <property type="match status" value="1"/>
</dbReference>
<dbReference type="SUPFAM" id="SSF56601">
    <property type="entry name" value="beta-lactamase/transpeptidase-like"/>
    <property type="match status" value="1"/>
</dbReference>
<dbReference type="PROSITE" id="PS00336">
    <property type="entry name" value="BETA_LACTAMASE_C"/>
    <property type="match status" value="1"/>
</dbReference>
<keyword id="KW-0002">3D-structure</keyword>
<keyword id="KW-0046">Antibiotic resistance</keyword>
<keyword id="KW-0903">Direct protein sequencing</keyword>
<keyword id="KW-0378">Hydrolase</keyword>
<keyword id="KW-0574">Periplasm</keyword>
<protein>
    <recommendedName>
        <fullName evidence="1 6 7">Beta-lactamase</fullName>
        <ecNumber>3.5.2.6</ecNumber>
    </recommendedName>
    <alternativeName>
        <fullName evidence="1 6 7">Cephalosporinase</fullName>
    </alternativeName>
</protein>
<evidence type="ECO:0000250" key="1">
    <source>
        <dbReference type="UniProtKB" id="P05364"/>
    </source>
</evidence>
<evidence type="ECO:0000255" key="2"/>
<evidence type="ECO:0000255" key="3">
    <source>
        <dbReference type="PROSITE-ProRule" id="PRU10102"/>
    </source>
</evidence>
<evidence type="ECO:0000269" key="4">
    <source>
    </source>
</evidence>
<evidence type="ECO:0000269" key="5">
    <source ref="2"/>
</evidence>
<evidence type="ECO:0000303" key="6">
    <source>
    </source>
</evidence>
<evidence type="ECO:0000303" key="7">
    <source ref="2"/>
</evidence>
<evidence type="ECO:0000305" key="8"/>
<evidence type="ECO:0000305" key="9">
    <source>
    </source>
</evidence>
<evidence type="ECO:0007829" key="10">
    <source>
        <dbReference type="PDB" id="2QZ6"/>
    </source>
</evidence>
<accession>P85302</accession>